<reference key="1">
    <citation type="journal article" date="2004" name="Proc. Natl. Acad. Sci. U.S.A.">
        <title>Genome sequence of the enterobacterial phytopathogen Erwinia carotovora subsp. atroseptica and characterization of virulence factors.</title>
        <authorList>
            <person name="Bell K.S."/>
            <person name="Sebaihia M."/>
            <person name="Pritchard L."/>
            <person name="Holden M.T.G."/>
            <person name="Hyman L.J."/>
            <person name="Holeva M.C."/>
            <person name="Thomson N.R."/>
            <person name="Bentley S.D."/>
            <person name="Churcher L.J.C."/>
            <person name="Mungall K."/>
            <person name="Atkin R."/>
            <person name="Bason N."/>
            <person name="Brooks K."/>
            <person name="Chillingworth T."/>
            <person name="Clark K."/>
            <person name="Doggett J."/>
            <person name="Fraser A."/>
            <person name="Hance Z."/>
            <person name="Hauser H."/>
            <person name="Jagels K."/>
            <person name="Moule S."/>
            <person name="Norbertczak H."/>
            <person name="Ormond D."/>
            <person name="Price C."/>
            <person name="Quail M.A."/>
            <person name="Sanders M."/>
            <person name="Walker D."/>
            <person name="Whitehead S."/>
            <person name="Salmond G.P.C."/>
            <person name="Birch P.R.J."/>
            <person name="Parkhill J."/>
            <person name="Toth I.K."/>
        </authorList>
    </citation>
    <scope>NUCLEOTIDE SEQUENCE [LARGE SCALE GENOMIC DNA]</scope>
    <source>
        <strain>SCRI 1043 / ATCC BAA-672</strain>
    </source>
</reference>
<dbReference type="EC" id="3.1.-.-" evidence="1"/>
<dbReference type="EMBL" id="BX950851">
    <property type="protein sequence ID" value="CAG76823.1"/>
    <property type="molecule type" value="Genomic_DNA"/>
</dbReference>
<dbReference type="SMR" id="Q6D075"/>
<dbReference type="STRING" id="218491.ECA3926"/>
<dbReference type="KEGG" id="eca:ECA3926"/>
<dbReference type="eggNOG" id="COG0816">
    <property type="taxonomic scope" value="Bacteria"/>
</dbReference>
<dbReference type="HOGENOM" id="CLU_098240_3_0_6"/>
<dbReference type="OrthoDB" id="9796140at2"/>
<dbReference type="Proteomes" id="UP000007966">
    <property type="component" value="Chromosome"/>
</dbReference>
<dbReference type="GO" id="GO:0005829">
    <property type="term" value="C:cytosol"/>
    <property type="evidence" value="ECO:0007669"/>
    <property type="project" value="TreeGrafter"/>
</dbReference>
<dbReference type="GO" id="GO:0004518">
    <property type="term" value="F:nuclease activity"/>
    <property type="evidence" value="ECO:0007669"/>
    <property type="project" value="UniProtKB-KW"/>
</dbReference>
<dbReference type="GO" id="GO:0000967">
    <property type="term" value="P:rRNA 5'-end processing"/>
    <property type="evidence" value="ECO:0007669"/>
    <property type="project" value="UniProtKB-UniRule"/>
</dbReference>
<dbReference type="CDD" id="cd16964">
    <property type="entry name" value="YqgF"/>
    <property type="match status" value="1"/>
</dbReference>
<dbReference type="FunFam" id="3.30.420.140:FF:000002">
    <property type="entry name" value="Putative pre-16S rRNA nuclease"/>
    <property type="match status" value="1"/>
</dbReference>
<dbReference type="Gene3D" id="3.30.420.140">
    <property type="entry name" value="YqgF/RNase H-like domain"/>
    <property type="match status" value="1"/>
</dbReference>
<dbReference type="HAMAP" id="MF_00651">
    <property type="entry name" value="Nuclease_YqgF"/>
    <property type="match status" value="1"/>
</dbReference>
<dbReference type="InterPro" id="IPR012337">
    <property type="entry name" value="RNaseH-like_sf"/>
</dbReference>
<dbReference type="InterPro" id="IPR005227">
    <property type="entry name" value="YqgF"/>
</dbReference>
<dbReference type="InterPro" id="IPR006641">
    <property type="entry name" value="YqgF/RNaseH-like_dom"/>
</dbReference>
<dbReference type="InterPro" id="IPR037027">
    <property type="entry name" value="YqgF/RNaseH-like_dom_sf"/>
</dbReference>
<dbReference type="NCBIfam" id="TIGR00250">
    <property type="entry name" value="RNAse_H_YqgF"/>
    <property type="match status" value="1"/>
</dbReference>
<dbReference type="PANTHER" id="PTHR33317">
    <property type="entry name" value="POLYNUCLEOTIDYL TRANSFERASE, RIBONUCLEASE H-LIKE SUPERFAMILY PROTEIN"/>
    <property type="match status" value="1"/>
</dbReference>
<dbReference type="PANTHER" id="PTHR33317:SF4">
    <property type="entry name" value="POLYNUCLEOTIDYL TRANSFERASE, RIBONUCLEASE H-LIKE SUPERFAMILY PROTEIN"/>
    <property type="match status" value="1"/>
</dbReference>
<dbReference type="Pfam" id="PF03652">
    <property type="entry name" value="RuvX"/>
    <property type="match status" value="1"/>
</dbReference>
<dbReference type="SMART" id="SM00732">
    <property type="entry name" value="YqgFc"/>
    <property type="match status" value="1"/>
</dbReference>
<dbReference type="SUPFAM" id="SSF53098">
    <property type="entry name" value="Ribonuclease H-like"/>
    <property type="match status" value="1"/>
</dbReference>
<feature type="chain" id="PRO_0000172064" description="Putative pre-16S rRNA nuclease">
    <location>
        <begin position="1"/>
        <end position="139"/>
    </location>
</feature>
<proteinExistence type="inferred from homology"/>
<evidence type="ECO:0000255" key="1">
    <source>
        <dbReference type="HAMAP-Rule" id="MF_00651"/>
    </source>
</evidence>
<accession>Q6D075</accession>
<gene>
    <name evidence="1" type="primary">yqgF</name>
    <name type="ordered locus">ECA3926</name>
</gene>
<comment type="function">
    <text evidence="1">Could be a nuclease involved in processing of the 5'-end of pre-16S rRNA.</text>
</comment>
<comment type="subcellular location">
    <subcellularLocation>
        <location evidence="1">Cytoplasm</location>
    </subcellularLocation>
</comment>
<comment type="similarity">
    <text evidence="1">Belongs to the YqgF nuclease family.</text>
</comment>
<name>YQGF_PECAS</name>
<protein>
    <recommendedName>
        <fullName evidence="1">Putative pre-16S rRNA nuclease</fullName>
        <ecNumber evidence="1">3.1.-.-</ecNumber>
    </recommendedName>
</protein>
<organism>
    <name type="scientific">Pectobacterium atrosepticum (strain SCRI 1043 / ATCC BAA-672)</name>
    <name type="common">Erwinia carotovora subsp. atroseptica</name>
    <dbReference type="NCBI Taxonomy" id="218491"/>
    <lineage>
        <taxon>Bacteria</taxon>
        <taxon>Pseudomonadati</taxon>
        <taxon>Pseudomonadota</taxon>
        <taxon>Gammaproteobacteria</taxon>
        <taxon>Enterobacterales</taxon>
        <taxon>Pectobacteriaceae</taxon>
        <taxon>Pectobacterium</taxon>
    </lineage>
</organism>
<sequence>MSNRTLLAFDFGTKSIGVAIGQEITGTARALTSFKAQEGIPDWQKVEKLLSEWQPDLVVVGLPLNMDGTEQPLTARARKFANRLHGRFGVAIELHDERLSTVEARADLFERGGFKALDKGSVDAASAVIILESWFEAQH</sequence>
<keyword id="KW-0963">Cytoplasm</keyword>
<keyword id="KW-0378">Hydrolase</keyword>
<keyword id="KW-0540">Nuclease</keyword>
<keyword id="KW-1185">Reference proteome</keyword>
<keyword id="KW-0690">Ribosome biogenesis</keyword>